<keyword id="KW-0066">ATP synthesis</keyword>
<keyword id="KW-1003">Cell membrane</keyword>
<keyword id="KW-0139">CF(1)</keyword>
<keyword id="KW-0375">Hydrogen ion transport</keyword>
<keyword id="KW-0406">Ion transport</keyword>
<keyword id="KW-0472">Membrane</keyword>
<keyword id="KW-1185">Reference proteome</keyword>
<keyword id="KW-0813">Transport</keyword>
<organism>
    <name type="scientific">Streptococcus gordonii (strain Challis / ATCC 35105 / BCRC 15272 / CH1 / DL1 / V288)</name>
    <dbReference type="NCBI Taxonomy" id="467705"/>
    <lineage>
        <taxon>Bacteria</taxon>
        <taxon>Bacillati</taxon>
        <taxon>Bacillota</taxon>
        <taxon>Bacilli</taxon>
        <taxon>Lactobacillales</taxon>
        <taxon>Streptococcaceae</taxon>
        <taxon>Streptococcus</taxon>
    </lineage>
</organism>
<proteinExistence type="inferred from homology"/>
<name>ATPD_STRGC</name>
<comment type="function">
    <text evidence="1">F(1)F(0) ATP synthase produces ATP from ADP in the presence of a proton or sodium gradient. F-type ATPases consist of two structural domains, F(1) containing the extramembraneous catalytic core and F(0) containing the membrane proton channel, linked together by a central stalk and a peripheral stalk. During catalysis, ATP synthesis in the catalytic domain of F(1) is coupled via a rotary mechanism of the central stalk subunits to proton translocation.</text>
</comment>
<comment type="function">
    <text evidence="1">This protein is part of the stalk that links CF(0) to CF(1). It either transmits conformational changes from CF(0) to CF(1) or is implicated in proton conduction.</text>
</comment>
<comment type="subunit">
    <text evidence="1">F-type ATPases have 2 components, F(1) - the catalytic core - and F(0) - the membrane proton channel. F(1) has five subunits: alpha(3), beta(3), gamma(1), delta(1), epsilon(1). F(0) has three main subunits: a(1), b(2) and c(10-14). The alpha and beta chains form an alternating ring which encloses part of the gamma chain. F(1) is attached to F(0) by a central stalk formed by the gamma and epsilon chains, while a peripheral stalk is formed by the delta and b chains.</text>
</comment>
<comment type="subcellular location">
    <subcellularLocation>
        <location evidence="1">Cell membrane</location>
        <topology evidence="1">Peripheral membrane protein</topology>
    </subcellularLocation>
</comment>
<comment type="similarity">
    <text evidence="1">Belongs to the ATPase delta chain family.</text>
</comment>
<gene>
    <name evidence="1" type="primary">atpH</name>
    <name type="ordered locus">SGO_1545</name>
</gene>
<sequence length="178" mass="20566">MDKRSYATVEKYAAPFVQIVLEKNQQRDVFRELSQIKGIFEETYLADFLSHIGVSQAEKSKVLRLFQTCDSVLVNNLIEVLIKNGREDFFYPILLDILKKIEKETNEFEVTIHSVEGLSEEQKARLIPVIEKKMNLKVRSIKENLDRSLIGGFAITANHKIIDTSIKRQLKAVKEKLK</sequence>
<reference key="1">
    <citation type="journal article" date="2007" name="J. Bacteriol.">
        <title>Genome-wide transcriptional changes in Streptococcus gordonii in response to competence signaling peptide.</title>
        <authorList>
            <person name="Vickerman M.M."/>
            <person name="Iobst S."/>
            <person name="Jesionowski A.M."/>
            <person name="Gill S.R."/>
        </authorList>
    </citation>
    <scope>NUCLEOTIDE SEQUENCE [LARGE SCALE GENOMIC DNA]</scope>
    <source>
        <strain>Challis / ATCC 35105 / BCRC 15272 / CH1 / DL1 / V288</strain>
    </source>
</reference>
<feature type="chain" id="PRO_1000184809" description="ATP synthase subunit delta">
    <location>
        <begin position="1"/>
        <end position="178"/>
    </location>
</feature>
<protein>
    <recommendedName>
        <fullName evidence="1">ATP synthase subunit delta</fullName>
    </recommendedName>
    <alternativeName>
        <fullName evidence="1">ATP synthase F(1) sector subunit delta</fullName>
    </alternativeName>
    <alternativeName>
        <fullName evidence="1">F-type ATPase subunit delta</fullName>
        <shortName evidence="1">F-ATPase subunit delta</shortName>
    </alternativeName>
</protein>
<evidence type="ECO:0000255" key="1">
    <source>
        <dbReference type="HAMAP-Rule" id="MF_01416"/>
    </source>
</evidence>
<accession>A8AYG4</accession>
<dbReference type="EMBL" id="CP000725">
    <property type="protein sequence ID" value="ABV10178.1"/>
    <property type="molecule type" value="Genomic_DNA"/>
</dbReference>
<dbReference type="RefSeq" id="WP_012130616.1">
    <property type="nucleotide sequence ID" value="NC_009785.1"/>
</dbReference>
<dbReference type="SMR" id="A8AYG4"/>
<dbReference type="STRING" id="467705.SGO_1545"/>
<dbReference type="KEGG" id="sgo:SGO_1545"/>
<dbReference type="eggNOG" id="COG0712">
    <property type="taxonomic scope" value="Bacteria"/>
</dbReference>
<dbReference type="HOGENOM" id="CLU_085114_1_2_9"/>
<dbReference type="Proteomes" id="UP000001131">
    <property type="component" value="Chromosome"/>
</dbReference>
<dbReference type="GO" id="GO:0005886">
    <property type="term" value="C:plasma membrane"/>
    <property type="evidence" value="ECO:0007669"/>
    <property type="project" value="UniProtKB-SubCell"/>
</dbReference>
<dbReference type="GO" id="GO:0045259">
    <property type="term" value="C:proton-transporting ATP synthase complex"/>
    <property type="evidence" value="ECO:0007669"/>
    <property type="project" value="UniProtKB-KW"/>
</dbReference>
<dbReference type="GO" id="GO:0046933">
    <property type="term" value="F:proton-transporting ATP synthase activity, rotational mechanism"/>
    <property type="evidence" value="ECO:0007669"/>
    <property type="project" value="UniProtKB-UniRule"/>
</dbReference>
<dbReference type="Gene3D" id="1.10.520.20">
    <property type="entry name" value="N-terminal domain of the delta subunit of the F1F0-ATP synthase"/>
    <property type="match status" value="1"/>
</dbReference>
<dbReference type="HAMAP" id="MF_01416">
    <property type="entry name" value="ATP_synth_delta_bact"/>
    <property type="match status" value="1"/>
</dbReference>
<dbReference type="InterPro" id="IPR026015">
    <property type="entry name" value="ATP_synth_OSCP/delta_N_sf"/>
</dbReference>
<dbReference type="InterPro" id="IPR000711">
    <property type="entry name" value="ATPase_OSCP/dsu"/>
</dbReference>
<dbReference type="NCBIfam" id="TIGR01145">
    <property type="entry name" value="ATP_synt_delta"/>
    <property type="match status" value="1"/>
</dbReference>
<dbReference type="NCBIfam" id="NF004401">
    <property type="entry name" value="PRK05758.2-1"/>
    <property type="match status" value="1"/>
</dbReference>
<dbReference type="PANTHER" id="PTHR11910">
    <property type="entry name" value="ATP SYNTHASE DELTA CHAIN"/>
    <property type="match status" value="1"/>
</dbReference>
<dbReference type="Pfam" id="PF00213">
    <property type="entry name" value="OSCP"/>
    <property type="match status" value="1"/>
</dbReference>
<dbReference type="PRINTS" id="PR00125">
    <property type="entry name" value="ATPASEDELTA"/>
</dbReference>
<dbReference type="SUPFAM" id="SSF47928">
    <property type="entry name" value="N-terminal domain of the delta subunit of the F1F0-ATP synthase"/>
    <property type="match status" value="1"/>
</dbReference>